<keyword id="KW-0002">3D-structure</keyword>
<keyword id="KW-0028">Amino-acid biosynthesis</keyword>
<keyword id="KW-0220">Diaminopimelate biosynthesis</keyword>
<keyword id="KW-0457">Lysine biosynthesis</keyword>
<keyword id="KW-0486">Methionine biosynthesis</keyword>
<keyword id="KW-0521">NADP</keyword>
<keyword id="KW-0560">Oxidoreductase</keyword>
<keyword id="KW-1185">Reference proteome</keyword>
<keyword id="KW-0791">Threonine biosynthesis</keyword>
<gene>
    <name type="primary">asd</name>
    <name type="ordered locus">PA3117</name>
</gene>
<organism>
    <name type="scientific">Pseudomonas aeruginosa (strain ATCC 15692 / DSM 22644 / CIP 104116 / JCM 14847 / LMG 12228 / 1C / PRS 101 / PAO1)</name>
    <dbReference type="NCBI Taxonomy" id="208964"/>
    <lineage>
        <taxon>Bacteria</taxon>
        <taxon>Pseudomonadati</taxon>
        <taxon>Pseudomonadota</taxon>
        <taxon>Gammaproteobacteria</taxon>
        <taxon>Pseudomonadales</taxon>
        <taxon>Pseudomonadaceae</taxon>
        <taxon>Pseudomonas</taxon>
    </lineage>
</organism>
<evidence type="ECO:0000250" key="1"/>
<evidence type="ECO:0000269" key="2">
    <source>
    </source>
</evidence>
<evidence type="ECO:0000305" key="3"/>
<evidence type="ECO:0007829" key="4">
    <source>
        <dbReference type="PDB" id="5BNT"/>
    </source>
</evidence>
<comment type="function">
    <text evidence="2">Catalyzes the NADPH-dependent formation of L-aspartate-semialdehyde (L-ASA) by the reductive dephosphorylation of L-aspartyl-4-phosphate.</text>
</comment>
<comment type="catalytic activity">
    <reaction evidence="2">
        <text>L-aspartate 4-semialdehyde + phosphate + NADP(+) = 4-phospho-L-aspartate + NADPH + H(+)</text>
        <dbReference type="Rhea" id="RHEA:24284"/>
        <dbReference type="ChEBI" id="CHEBI:15378"/>
        <dbReference type="ChEBI" id="CHEBI:43474"/>
        <dbReference type="ChEBI" id="CHEBI:57535"/>
        <dbReference type="ChEBI" id="CHEBI:57783"/>
        <dbReference type="ChEBI" id="CHEBI:58349"/>
        <dbReference type="ChEBI" id="CHEBI:537519"/>
        <dbReference type="EC" id="1.2.1.11"/>
    </reaction>
</comment>
<comment type="biophysicochemical properties">
    <kinetics>
        <KM evidence="2">0.12 mM for L-aspartate 4-semialdehyde</KM>
        <KM evidence="2">0.13 mM for NADP(+)</KM>
        <KM evidence="2">1.5 mM for phosphate</KM>
    </kinetics>
</comment>
<comment type="pathway">
    <text>Amino-acid biosynthesis; L-lysine biosynthesis via DAP pathway; (S)-tetrahydrodipicolinate from L-aspartate: step 2/4.</text>
</comment>
<comment type="pathway">
    <text>Amino-acid biosynthesis; L-methionine biosynthesis via de novo pathway; L-homoserine from L-aspartate: step 2/3.</text>
</comment>
<comment type="pathway">
    <text>Amino-acid biosynthesis; L-threonine biosynthesis; L-threonine from L-aspartate: step 2/5.</text>
</comment>
<comment type="subunit">
    <text evidence="1">Homodimer.</text>
</comment>
<comment type="similarity">
    <text evidence="3">Belongs to the aspartate-semialdehyde dehydrogenase family.</text>
</comment>
<reference key="1">
    <citation type="journal article" date="1997" name="Microbiology">
        <title>Molecular genetic analysis of the region containing the essential Pseudomonas aeruginosa asd gene encoding aspartate-beta-semialdehyde dehydrogenase.</title>
        <authorList>
            <person name="Hoang T.T."/>
            <person name="Williams S."/>
            <person name="Schweizer H.P."/>
            <person name="Lam J.S."/>
        </authorList>
    </citation>
    <scope>NUCLEOTIDE SEQUENCE [GENOMIC DNA]</scope>
    <source>
        <strain>ATCC 15692 / DSM 22644 / CIP 104116 / JCM 14847 / LMG 12228 / 1C / PRS 101 / PAO1</strain>
    </source>
</reference>
<reference key="2">
    <citation type="journal article" date="2000" name="Nature">
        <title>Complete genome sequence of Pseudomonas aeruginosa PAO1, an opportunistic pathogen.</title>
        <authorList>
            <person name="Stover C.K."/>
            <person name="Pham X.-Q.T."/>
            <person name="Erwin A.L."/>
            <person name="Mizoguchi S.D."/>
            <person name="Warrener P."/>
            <person name="Hickey M.J."/>
            <person name="Brinkman F.S.L."/>
            <person name="Hufnagle W.O."/>
            <person name="Kowalik D.J."/>
            <person name="Lagrou M."/>
            <person name="Garber R.L."/>
            <person name="Goltry L."/>
            <person name="Tolentino E."/>
            <person name="Westbrock-Wadman S."/>
            <person name="Yuan Y."/>
            <person name="Brody L.L."/>
            <person name="Coulter S.N."/>
            <person name="Folger K.R."/>
            <person name="Kas A."/>
            <person name="Larbig K."/>
            <person name="Lim R.M."/>
            <person name="Smith K.A."/>
            <person name="Spencer D.H."/>
            <person name="Wong G.K.-S."/>
            <person name="Wu Z."/>
            <person name="Paulsen I.T."/>
            <person name="Reizer J."/>
            <person name="Saier M.H. Jr."/>
            <person name="Hancock R.E.W."/>
            <person name="Lory S."/>
            <person name="Olson M.V."/>
        </authorList>
    </citation>
    <scope>NUCLEOTIDE SEQUENCE [LARGE SCALE GENOMIC DNA]</scope>
    <source>
        <strain>ATCC 15692 / DSM 22644 / CIP 104116 / JCM 14847 / LMG 12228 / 1C / PRS 101 / PAO1</strain>
    </source>
</reference>
<reference key="3">
    <citation type="journal article" date="2002" name="Protein Expr. Purif.">
        <title>Expression and purification of aspartate beta-semialdehyde dehydrogenase from infectious microorganisms.</title>
        <authorList>
            <person name="Moore R.A."/>
            <person name="Bocik W.E."/>
            <person name="Viola R.E."/>
        </authorList>
    </citation>
    <scope>FUNCTION</scope>
    <scope>CATALYTIC ACTIVITY</scope>
    <scope>KINETIC PARAMETERS</scope>
    <source>
        <strain>ATCC 15692 / DSM 22644 / CIP 104116 / JCM 14847 / LMG 12228 / 1C / PRS 101 / PAO1</strain>
    </source>
</reference>
<sequence length="370" mass="40495">MKRVGLIGWRGMVGSVLMQRMLEERDFDLIEPVFFTTSNVGGQGPEVGKDIAPLKDAYSIDELKTLDVILTCQGGDYTSEVFPKLREAGWQGYWIDAASSLRMEDDAVIVLDPVNRKVIDQALDAGTRNYIGGNCTVSLMLMALGGLFDAGLVEWMSAMTYQAASGAGAQNMRELLKQMGAAHASVADDLANPASAILDIDRKVAETLRSEAFPTEHFGAPLGGSLIPWIDKELPNGQSREEWKAQAETNKILARFKNPIPVDGICVRVGAMRCHSQALTIKLNKDVPLTDIEGLISQHNPWVKLVPNHREVSVRELTPAAVTGTLSVPVGRLRKLNMGSQYLGAFTVGDQLLWGAAEPLRRMLRILLER</sequence>
<protein>
    <recommendedName>
        <fullName>Aspartate-semialdehyde dehydrogenase</fullName>
        <shortName>ASA dehydrogenase</shortName>
        <shortName>ASADH</shortName>
        <ecNumber>1.2.1.11</ecNumber>
    </recommendedName>
    <alternativeName>
        <fullName>Aspartate-beta-semialdehyde dehydrogenase</fullName>
    </alternativeName>
</protein>
<accession>Q51344</accession>
<dbReference type="EC" id="1.2.1.11"/>
<dbReference type="EMBL" id="U11055">
    <property type="protein sequence ID" value="AAB51626.1"/>
    <property type="molecule type" value="Genomic_DNA"/>
</dbReference>
<dbReference type="EMBL" id="AE004091">
    <property type="protein sequence ID" value="AAG06505.1"/>
    <property type="molecule type" value="Genomic_DNA"/>
</dbReference>
<dbReference type="PIR" id="C83255">
    <property type="entry name" value="C83255"/>
</dbReference>
<dbReference type="RefSeq" id="NP_251807.1">
    <property type="nucleotide sequence ID" value="NC_002516.2"/>
</dbReference>
<dbReference type="RefSeq" id="WP_003111187.1">
    <property type="nucleotide sequence ID" value="NZ_QZGE01000023.1"/>
</dbReference>
<dbReference type="PDB" id="5BNT">
    <property type="method" value="X-ray"/>
    <property type="resolution" value="2.10 A"/>
    <property type="chains" value="A/B/C/D=1-370"/>
</dbReference>
<dbReference type="PDBsum" id="5BNT"/>
<dbReference type="SMR" id="Q51344"/>
<dbReference type="FunCoup" id="Q51344">
    <property type="interactions" value="171"/>
</dbReference>
<dbReference type="STRING" id="208964.PA3117"/>
<dbReference type="PaxDb" id="208964-PA3117"/>
<dbReference type="GeneID" id="882803"/>
<dbReference type="KEGG" id="pae:PA3117"/>
<dbReference type="PATRIC" id="fig|208964.12.peg.3269"/>
<dbReference type="PseudoCAP" id="PA3117"/>
<dbReference type="HOGENOM" id="CLU_066397_0_0_6"/>
<dbReference type="InParanoid" id="Q51344"/>
<dbReference type="OrthoDB" id="9022717at2"/>
<dbReference type="PhylomeDB" id="Q51344"/>
<dbReference type="BioCyc" id="PAER208964:G1FZ6-3173-MONOMER"/>
<dbReference type="BRENDA" id="1.2.1.11">
    <property type="organism ID" value="5087"/>
</dbReference>
<dbReference type="SABIO-RK" id="Q51344"/>
<dbReference type="UniPathway" id="UPA00034">
    <property type="reaction ID" value="UER00016"/>
</dbReference>
<dbReference type="UniPathway" id="UPA00050">
    <property type="reaction ID" value="UER00463"/>
</dbReference>
<dbReference type="UniPathway" id="UPA00051">
    <property type="reaction ID" value="UER00464"/>
</dbReference>
<dbReference type="EvolutionaryTrace" id="Q51344"/>
<dbReference type="Proteomes" id="UP000002438">
    <property type="component" value="Chromosome"/>
</dbReference>
<dbReference type="GO" id="GO:0004073">
    <property type="term" value="F:aspartate-semialdehyde dehydrogenase activity"/>
    <property type="evidence" value="ECO:0007669"/>
    <property type="project" value="UniProtKB-UniRule"/>
</dbReference>
<dbReference type="GO" id="GO:0051287">
    <property type="term" value="F:NAD binding"/>
    <property type="evidence" value="ECO:0007669"/>
    <property type="project" value="InterPro"/>
</dbReference>
<dbReference type="GO" id="GO:0050661">
    <property type="term" value="F:NADP binding"/>
    <property type="evidence" value="ECO:0007669"/>
    <property type="project" value="UniProtKB-UniRule"/>
</dbReference>
<dbReference type="GO" id="GO:0046983">
    <property type="term" value="F:protein dimerization activity"/>
    <property type="evidence" value="ECO:0007669"/>
    <property type="project" value="InterPro"/>
</dbReference>
<dbReference type="GO" id="GO:0071266">
    <property type="term" value="P:'de novo' L-methionine biosynthetic process"/>
    <property type="evidence" value="ECO:0007669"/>
    <property type="project" value="UniProtKB-UniRule"/>
</dbReference>
<dbReference type="GO" id="GO:0019877">
    <property type="term" value="P:diaminopimelate biosynthetic process"/>
    <property type="evidence" value="ECO:0007669"/>
    <property type="project" value="UniProtKB-UniRule"/>
</dbReference>
<dbReference type="GO" id="GO:0009097">
    <property type="term" value="P:isoleucine biosynthetic process"/>
    <property type="evidence" value="ECO:0007669"/>
    <property type="project" value="InterPro"/>
</dbReference>
<dbReference type="GO" id="GO:0009089">
    <property type="term" value="P:lysine biosynthetic process via diaminopimelate"/>
    <property type="evidence" value="ECO:0007669"/>
    <property type="project" value="UniProtKB-UniRule"/>
</dbReference>
<dbReference type="GO" id="GO:0009088">
    <property type="term" value="P:threonine biosynthetic process"/>
    <property type="evidence" value="ECO:0007669"/>
    <property type="project" value="UniProtKB-UniRule"/>
</dbReference>
<dbReference type="CDD" id="cd23938">
    <property type="entry name" value="ASADH_C_bac_like"/>
    <property type="match status" value="1"/>
</dbReference>
<dbReference type="CDD" id="cd02314">
    <property type="entry name" value="VcASADH1_like_N"/>
    <property type="match status" value="1"/>
</dbReference>
<dbReference type="Gene3D" id="3.30.360.10">
    <property type="entry name" value="Dihydrodipicolinate Reductase, domain 2"/>
    <property type="match status" value="1"/>
</dbReference>
<dbReference type="Gene3D" id="3.40.50.720">
    <property type="entry name" value="NAD(P)-binding Rossmann-like Domain"/>
    <property type="match status" value="1"/>
</dbReference>
<dbReference type="HAMAP" id="MF_02121">
    <property type="entry name" value="ASADH"/>
    <property type="match status" value="1"/>
</dbReference>
<dbReference type="InterPro" id="IPR000319">
    <property type="entry name" value="Asp-semialdehyde_DH_CS"/>
</dbReference>
<dbReference type="InterPro" id="IPR011534">
    <property type="entry name" value="Asp_ADH_gamma-type"/>
</dbReference>
<dbReference type="InterPro" id="IPR012080">
    <property type="entry name" value="Asp_semialdehyde_DH"/>
</dbReference>
<dbReference type="InterPro" id="IPR036291">
    <property type="entry name" value="NAD(P)-bd_dom_sf"/>
</dbReference>
<dbReference type="InterPro" id="IPR000534">
    <property type="entry name" value="Semialdehyde_DH_NAD-bd"/>
</dbReference>
<dbReference type="InterPro" id="IPR012280">
    <property type="entry name" value="Semialdhyde_DH_dimer_dom"/>
</dbReference>
<dbReference type="NCBIfam" id="TIGR01745">
    <property type="entry name" value="asd_gamma"/>
    <property type="match status" value="1"/>
</dbReference>
<dbReference type="NCBIfam" id="NF005144">
    <property type="entry name" value="PRK06598.1"/>
    <property type="match status" value="1"/>
</dbReference>
<dbReference type="PANTHER" id="PTHR46278:SF4">
    <property type="entry name" value="ASPARTATE-SEMIALDEHYDE DEHYDROGENASE"/>
    <property type="match status" value="1"/>
</dbReference>
<dbReference type="PANTHER" id="PTHR46278">
    <property type="entry name" value="DEHYDROGENASE, PUTATIVE-RELATED"/>
    <property type="match status" value="1"/>
</dbReference>
<dbReference type="Pfam" id="PF01118">
    <property type="entry name" value="Semialdhyde_dh"/>
    <property type="match status" value="1"/>
</dbReference>
<dbReference type="Pfam" id="PF02774">
    <property type="entry name" value="Semialdhyde_dhC"/>
    <property type="match status" value="1"/>
</dbReference>
<dbReference type="PIRSF" id="PIRSF000148">
    <property type="entry name" value="ASA_dh"/>
    <property type="match status" value="1"/>
</dbReference>
<dbReference type="SMART" id="SM00859">
    <property type="entry name" value="Semialdhyde_dh"/>
    <property type="match status" value="1"/>
</dbReference>
<dbReference type="SUPFAM" id="SSF55347">
    <property type="entry name" value="Glyceraldehyde-3-phosphate dehydrogenase-like, C-terminal domain"/>
    <property type="match status" value="1"/>
</dbReference>
<dbReference type="SUPFAM" id="SSF51735">
    <property type="entry name" value="NAD(P)-binding Rossmann-fold domains"/>
    <property type="match status" value="1"/>
</dbReference>
<dbReference type="PROSITE" id="PS01103">
    <property type="entry name" value="ASD"/>
    <property type="match status" value="1"/>
</dbReference>
<feature type="chain" id="PRO_0000141387" description="Aspartate-semialdehyde dehydrogenase">
    <location>
        <begin position="1"/>
        <end position="370"/>
    </location>
</feature>
<feature type="active site" description="Acyl-thioester intermediate" evidence="1">
    <location>
        <position position="135"/>
    </location>
</feature>
<feature type="active site" description="Proton acceptor" evidence="1">
    <location>
        <position position="275"/>
    </location>
</feature>
<feature type="binding site" evidence="1">
    <location>
        <begin position="10"/>
        <end position="13"/>
    </location>
    <ligand>
        <name>NADP(+)</name>
        <dbReference type="ChEBI" id="CHEBI:58349"/>
    </ligand>
</feature>
<feature type="binding site" evidence="1">
    <location>
        <begin position="37"/>
        <end position="38"/>
    </location>
    <ligand>
        <name>NADP(+)</name>
        <dbReference type="ChEBI" id="CHEBI:58349"/>
    </ligand>
</feature>
<feature type="binding site" evidence="1">
    <location>
        <position position="73"/>
    </location>
    <ligand>
        <name>NADP(+)</name>
        <dbReference type="ChEBI" id="CHEBI:58349"/>
    </ligand>
</feature>
<feature type="binding site" evidence="1">
    <location>
        <position position="102"/>
    </location>
    <ligand>
        <name>phosphate</name>
        <dbReference type="ChEBI" id="CHEBI:43474"/>
    </ligand>
</feature>
<feature type="binding site" evidence="1">
    <location>
        <position position="162"/>
    </location>
    <ligand>
        <name>substrate</name>
    </ligand>
</feature>
<feature type="binding site" evidence="1">
    <location>
        <begin position="165"/>
        <end position="166"/>
    </location>
    <ligand>
        <name>NADP(+)</name>
        <dbReference type="ChEBI" id="CHEBI:58349"/>
    </ligand>
</feature>
<feature type="binding site" evidence="1">
    <location>
        <position position="193"/>
    </location>
    <ligand>
        <name>NADP(+)</name>
        <dbReference type="ChEBI" id="CHEBI:58349"/>
    </ligand>
</feature>
<feature type="binding site" evidence="1">
    <location>
        <position position="241"/>
    </location>
    <ligand>
        <name>substrate</name>
    </ligand>
</feature>
<feature type="binding site" evidence="1">
    <location>
        <position position="244"/>
    </location>
    <ligand>
        <name>phosphate</name>
        <dbReference type="ChEBI" id="CHEBI:43474"/>
    </ligand>
</feature>
<feature type="binding site" evidence="1">
    <location>
        <position position="268"/>
    </location>
    <ligand>
        <name>substrate</name>
    </ligand>
</feature>
<feature type="binding site" evidence="1">
    <location>
        <position position="351"/>
    </location>
    <ligand>
        <name>NADP(+)</name>
        <dbReference type="ChEBI" id="CHEBI:58349"/>
    </ligand>
</feature>
<feature type="sequence conflict" description="In Ref. 1; AAB51626." evidence="3" ref="1">
    <original>M</original>
    <variation>I</variation>
    <location>
        <position position="18"/>
    </location>
</feature>
<feature type="sequence conflict" description="In Ref. 1; AAB51626." evidence="3" ref="1">
    <original>GQG</original>
    <variation>AQA</variation>
    <location>
        <begin position="42"/>
        <end position="44"/>
    </location>
</feature>
<feature type="sequence conflict" description="In Ref. 1; AAB51626." evidence="3" ref="1">
    <original>G</original>
    <variation>D</variation>
    <location>
        <position position="48"/>
    </location>
</feature>
<feature type="sequence conflict" description="In Ref. 1; AAB51626." evidence="3" ref="1">
    <original>E</original>
    <variation>D</variation>
    <location>
        <position position="174"/>
    </location>
</feature>
<feature type="sequence conflict" description="In Ref. 1; AAB51626." evidence="3" ref="1">
    <original>PNG</original>
    <variation>SQRR</variation>
    <location>
        <begin position="235"/>
        <end position="237"/>
    </location>
</feature>
<feature type="sequence conflict" description="In Ref. 1; AAB51626." evidence="3" ref="1">
    <original>S</original>
    <variation>R</variation>
    <location>
        <position position="297"/>
    </location>
</feature>
<feature type="sequence conflict" description="In Ref. 1; AAB51626." evidence="3" ref="1">
    <original>G</original>
    <variation>V</variation>
    <location>
        <position position="339"/>
    </location>
</feature>
<feature type="strand" evidence="4">
    <location>
        <begin position="3"/>
        <end position="8"/>
    </location>
</feature>
<feature type="helix" evidence="4">
    <location>
        <begin position="12"/>
        <end position="23"/>
    </location>
</feature>
<feature type="helix" evidence="4">
    <location>
        <begin position="26"/>
        <end position="28"/>
    </location>
</feature>
<feature type="strand" evidence="4">
    <location>
        <begin position="29"/>
        <end position="38"/>
    </location>
</feature>
<feature type="helix" evidence="4">
    <location>
        <begin position="60"/>
        <end position="63"/>
    </location>
</feature>
<feature type="strand" evidence="4">
    <location>
        <begin position="67"/>
        <end position="71"/>
    </location>
</feature>
<feature type="helix" evidence="4">
    <location>
        <begin position="75"/>
        <end position="87"/>
    </location>
</feature>
<feature type="strand" evidence="4">
    <location>
        <begin position="92"/>
        <end position="99"/>
    </location>
</feature>
<feature type="turn" evidence="4">
    <location>
        <begin position="100"/>
        <end position="103"/>
    </location>
</feature>
<feature type="strand" evidence="4">
    <location>
        <begin position="107"/>
        <end position="110"/>
    </location>
</feature>
<feature type="helix" evidence="4">
    <location>
        <begin position="112"/>
        <end position="125"/>
    </location>
</feature>
<feature type="strand" evidence="4">
    <location>
        <begin position="129"/>
        <end position="132"/>
    </location>
</feature>
<feature type="helix" evidence="4">
    <location>
        <begin position="135"/>
        <end position="149"/>
    </location>
</feature>
<feature type="strand" evidence="4">
    <location>
        <begin position="153"/>
        <end position="162"/>
    </location>
</feature>
<feature type="helix" evidence="4">
    <location>
        <begin position="164"/>
        <end position="166"/>
    </location>
</feature>
<feature type="helix" evidence="4">
    <location>
        <begin position="169"/>
        <end position="184"/>
    </location>
</feature>
<feature type="helix" evidence="4">
    <location>
        <begin position="187"/>
        <end position="191"/>
    </location>
</feature>
<feature type="helix" evidence="4">
    <location>
        <begin position="197"/>
        <end position="209"/>
    </location>
</feature>
<feature type="turn" evidence="4">
    <location>
        <begin position="216"/>
        <end position="218"/>
    </location>
</feature>
<feature type="helix" evidence="4">
    <location>
        <begin position="240"/>
        <end position="252"/>
    </location>
</feature>
<feature type="strand" evidence="4">
    <location>
        <begin position="262"/>
        <end position="268"/>
    </location>
</feature>
<feature type="strand" evidence="4">
    <location>
        <begin position="270"/>
        <end position="285"/>
    </location>
</feature>
<feature type="helix" evidence="4">
    <location>
        <begin position="289"/>
        <end position="297"/>
    </location>
</feature>
<feature type="strand" evidence="4">
    <location>
        <begin position="301"/>
        <end position="305"/>
    </location>
</feature>
<feature type="helix" evidence="4">
    <location>
        <begin position="310"/>
        <end position="316"/>
    </location>
</feature>
<feature type="helix" evidence="4">
    <location>
        <begin position="319"/>
        <end position="322"/>
    </location>
</feature>
<feature type="strand" evidence="4">
    <location>
        <begin position="328"/>
        <end position="335"/>
    </location>
</feature>
<feature type="strand" evidence="4">
    <location>
        <begin position="342"/>
        <end position="350"/>
    </location>
</feature>
<feature type="helix" evidence="4">
    <location>
        <begin position="353"/>
        <end position="357"/>
    </location>
</feature>
<feature type="helix" evidence="4">
    <location>
        <begin position="358"/>
        <end position="368"/>
    </location>
</feature>
<proteinExistence type="evidence at protein level"/>
<name>DHAS_PSEAE</name>